<dbReference type="EC" id="2.3.1.117" evidence="1"/>
<dbReference type="EMBL" id="FM200053">
    <property type="protein sequence ID" value="CAR58326.1"/>
    <property type="molecule type" value="Genomic_DNA"/>
</dbReference>
<dbReference type="RefSeq" id="WP_001186673.1">
    <property type="nucleotide sequence ID" value="NC_011147.1"/>
</dbReference>
<dbReference type="SMR" id="B5BL93"/>
<dbReference type="KEGG" id="sek:SSPA0212"/>
<dbReference type="HOGENOM" id="CLU_050859_0_1_6"/>
<dbReference type="UniPathway" id="UPA00034">
    <property type="reaction ID" value="UER00019"/>
</dbReference>
<dbReference type="Proteomes" id="UP000001869">
    <property type="component" value="Chromosome"/>
</dbReference>
<dbReference type="GO" id="GO:0005737">
    <property type="term" value="C:cytoplasm"/>
    <property type="evidence" value="ECO:0007669"/>
    <property type="project" value="UniProtKB-SubCell"/>
</dbReference>
<dbReference type="GO" id="GO:0008666">
    <property type="term" value="F:2,3,4,5-tetrahydropyridine-2,6-dicarboxylate N-succinyltransferase activity"/>
    <property type="evidence" value="ECO:0007669"/>
    <property type="project" value="UniProtKB-UniRule"/>
</dbReference>
<dbReference type="GO" id="GO:0016779">
    <property type="term" value="F:nucleotidyltransferase activity"/>
    <property type="evidence" value="ECO:0007669"/>
    <property type="project" value="TreeGrafter"/>
</dbReference>
<dbReference type="GO" id="GO:0019877">
    <property type="term" value="P:diaminopimelate biosynthetic process"/>
    <property type="evidence" value="ECO:0007669"/>
    <property type="project" value="UniProtKB-UniRule"/>
</dbReference>
<dbReference type="GO" id="GO:0009089">
    <property type="term" value="P:lysine biosynthetic process via diaminopimelate"/>
    <property type="evidence" value="ECO:0007669"/>
    <property type="project" value="UniProtKB-UniRule"/>
</dbReference>
<dbReference type="CDD" id="cd03350">
    <property type="entry name" value="LbH_THP_succinylT"/>
    <property type="match status" value="1"/>
</dbReference>
<dbReference type="FunFam" id="1.10.166.10:FF:000001">
    <property type="entry name" value="2,3,4,5-tetrahydropyridine-2,6-dicarboxylate N-succinyltransferase"/>
    <property type="match status" value="1"/>
</dbReference>
<dbReference type="FunFam" id="2.160.10.10:FF:000004">
    <property type="entry name" value="2,3,4,5-tetrahydropyridine-2,6-dicarboxylate N-succinyltransferase"/>
    <property type="match status" value="1"/>
</dbReference>
<dbReference type="Gene3D" id="2.160.10.10">
    <property type="entry name" value="Hexapeptide repeat proteins"/>
    <property type="match status" value="1"/>
</dbReference>
<dbReference type="Gene3D" id="1.10.166.10">
    <property type="entry name" value="Tetrahydrodipicolinate-N-succinyltransferase, N-terminal domain"/>
    <property type="match status" value="1"/>
</dbReference>
<dbReference type="HAMAP" id="MF_00811">
    <property type="entry name" value="DapD"/>
    <property type="match status" value="1"/>
</dbReference>
<dbReference type="InterPro" id="IPR005664">
    <property type="entry name" value="DapD_Trfase_Hexpep_rpt_fam"/>
</dbReference>
<dbReference type="InterPro" id="IPR001451">
    <property type="entry name" value="Hexapep"/>
</dbReference>
<dbReference type="InterPro" id="IPR018357">
    <property type="entry name" value="Hexapep_transf_CS"/>
</dbReference>
<dbReference type="InterPro" id="IPR023180">
    <property type="entry name" value="THP_succinylTrfase_dom1"/>
</dbReference>
<dbReference type="InterPro" id="IPR037133">
    <property type="entry name" value="THP_succinylTrfase_N_sf"/>
</dbReference>
<dbReference type="InterPro" id="IPR011004">
    <property type="entry name" value="Trimer_LpxA-like_sf"/>
</dbReference>
<dbReference type="NCBIfam" id="TIGR00965">
    <property type="entry name" value="dapD"/>
    <property type="match status" value="1"/>
</dbReference>
<dbReference type="NCBIfam" id="NF008808">
    <property type="entry name" value="PRK11830.1"/>
    <property type="match status" value="1"/>
</dbReference>
<dbReference type="PANTHER" id="PTHR19136:SF52">
    <property type="entry name" value="2,3,4,5-TETRAHYDROPYRIDINE-2,6-DICARBOXYLATE N-SUCCINYLTRANSFERASE"/>
    <property type="match status" value="1"/>
</dbReference>
<dbReference type="PANTHER" id="PTHR19136">
    <property type="entry name" value="MOLYBDENUM COFACTOR GUANYLYLTRANSFERASE"/>
    <property type="match status" value="1"/>
</dbReference>
<dbReference type="Pfam" id="PF14602">
    <property type="entry name" value="Hexapep_2"/>
    <property type="match status" value="1"/>
</dbReference>
<dbReference type="Pfam" id="PF14805">
    <property type="entry name" value="THDPS_N_2"/>
    <property type="match status" value="1"/>
</dbReference>
<dbReference type="SUPFAM" id="SSF51161">
    <property type="entry name" value="Trimeric LpxA-like enzymes"/>
    <property type="match status" value="1"/>
</dbReference>
<dbReference type="PROSITE" id="PS00101">
    <property type="entry name" value="HEXAPEP_TRANSFERASES"/>
    <property type="match status" value="1"/>
</dbReference>
<feature type="chain" id="PRO_1000134069" description="2,3,4,5-tetrahydropyridine-2,6-dicarboxylate N-succinyltransferase">
    <location>
        <begin position="1"/>
        <end position="274"/>
    </location>
</feature>
<organism>
    <name type="scientific">Salmonella paratyphi A (strain AKU_12601)</name>
    <dbReference type="NCBI Taxonomy" id="554290"/>
    <lineage>
        <taxon>Bacteria</taxon>
        <taxon>Pseudomonadati</taxon>
        <taxon>Pseudomonadota</taxon>
        <taxon>Gammaproteobacteria</taxon>
        <taxon>Enterobacterales</taxon>
        <taxon>Enterobacteriaceae</taxon>
        <taxon>Salmonella</taxon>
    </lineage>
</organism>
<comment type="catalytic activity">
    <reaction evidence="1">
        <text>(S)-2,3,4,5-tetrahydrodipicolinate + succinyl-CoA + H2O = (S)-2-succinylamino-6-oxoheptanedioate + CoA</text>
        <dbReference type="Rhea" id="RHEA:17325"/>
        <dbReference type="ChEBI" id="CHEBI:15377"/>
        <dbReference type="ChEBI" id="CHEBI:15685"/>
        <dbReference type="ChEBI" id="CHEBI:16845"/>
        <dbReference type="ChEBI" id="CHEBI:57287"/>
        <dbReference type="ChEBI" id="CHEBI:57292"/>
        <dbReference type="EC" id="2.3.1.117"/>
    </reaction>
</comment>
<comment type="pathway">
    <text evidence="1">Amino-acid biosynthesis; L-lysine biosynthesis via DAP pathway; LL-2,6-diaminopimelate from (S)-tetrahydrodipicolinate (succinylase route): step 1/3.</text>
</comment>
<comment type="subcellular location">
    <subcellularLocation>
        <location evidence="1">Cytoplasm</location>
    </subcellularLocation>
</comment>
<comment type="similarity">
    <text evidence="1">Belongs to the transferase hexapeptide repeat family.</text>
</comment>
<sequence length="274" mass="29852">MQQLQNVIETAFERRADITPANVDTVTREAVNQVISLLDSGALRVAEKIDGQWVTHQWLKKAVLLSFRINDNQVIDGAESRYFDKVPMKFADYDEARFQKEGFRVVPPAAVRQGAFIARNTVLMPSYVNIGAYVDEGTMVDTWATVGSCAQIGKNVHLSGGVGIGGVLEPLQANPTIIEDNCFIGARSEVVEGVIVEEGSVISMGVYLGQSTKIYDRETGEVHYGRVPAGSVVVSGNLPSKDGKYSLYCAVIVKKVDAKTRGKVGINELLRTID</sequence>
<proteinExistence type="inferred from homology"/>
<reference key="1">
    <citation type="journal article" date="2009" name="BMC Genomics">
        <title>Pseudogene accumulation in the evolutionary histories of Salmonella enterica serovars Paratyphi A and Typhi.</title>
        <authorList>
            <person name="Holt K.E."/>
            <person name="Thomson N.R."/>
            <person name="Wain J."/>
            <person name="Langridge G.C."/>
            <person name="Hasan R."/>
            <person name="Bhutta Z.A."/>
            <person name="Quail M.A."/>
            <person name="Norbertczak H."/>
            <person name="Walker D."/>
            <person name="Simmonds M."/>
            <person name="White B."/>
            <person name="Bason N."/>
            <person name="Mungall K."/>
            <person name="Dougan G."/>
            <person name="Parkhill J."/>
        </authorList>
    </citation>
    <scope>NUCLEOTIDE SEQUENCE [LARGE SCALE GENOMIC DNA]</scope>
    <source>
        <strain>AKU_12601</strain>
    </source>
</reference>
<keyword id="KW-0012">Acyltransferase</keyword>
<keyword id="KW-0028">Amino-acid biosynthesis</keyword>
<keyword id="KW-0963">Cytoplasm</keyword>
<keyword id="KW-0220">Diaminopimelate biosynthesis</keyword>
<keyword id="KW-0457">Lysine biosynthesis</keyword>
<keyword id="KW-0677">Repeat</keyword>
<keyword id="KW-0808">Transferase</keyword>
<name>DAPD_SALPK</name>
<accession>B5BL93</accession>
<protein>
    <recommendedName>
        <fullName evidence="1">2,3,4,5-tetrahydropyridine-2,6-dicarboxylate N-succinyltransferase</fullName>
        <ecNumber evidence="1">2.3.1.117</ecNumber>
    </recommendedName>
    <alternativeName>
        <fullName evidence="1">Tetrahydrodipicolinate N-succinyltransferase</fullName>
        <shortName evidence="1">THP succinyltransferase</shortName>
        <shortName evidence="1">Tetrahydropicolinate succinylase</shortName>
    </alternativeName>
</protein>
<evidence type="ECO:0000255" key="1">
    <source>
        <dbReference type="HAMAP-Rule" id="MF_00811"/>
    </source>
</evidence>
<gene>
    <name evidence="1" type="primary">dapD</name>
    <name type="ordered locus">SSPA0212</name>
</gene>